<feature type="chain" id="PRO_1000196360" description="Small ribosomal subunit protein bS16">
    <location>
        <begin position="1"/>
        <end position="116"/>
    </location>
</feature>
<proteinExistence type="inferred from homology"/>
<accession>B0B9D3</accession>
<organism>
    <name type="scientific">Chlamydia trachomatis serovar L2 (strain ATCC VR-902B / DSM 19102 / 434/Bu)</name>
    <dbReference type="NCBI Taxonomy" id="471472"/>
    <lineage>
        <taxon>Bacteria</taxon>
        <taxon>Pseudomonadati</taxon>
        <taxon>Chlamydiota</taxon>
        <taxon>Chlamydiia</taxon>
        <taxon>Chlamydiales</taxon>
        <taxon>Chlamydiaceae</taxon>
        <taxon>Chlamydia/Chlamydophila group</taxon>
        <taxon>Chlamydia</taxon>
    </lineage>
</organism>
<gene>
    <name evidence="1" type="primary">rpsP</name>
    <name type="ordered locus">CTL0281</name>
</gene>
<dbReference type="EMBL" id="AM884176">
    <property type="protein sequence ID" value="CAP03720.1"/>
    <property type="molecule type" value="Genomic_DNA"/>
</dbReference>
<dbReference type="RefSeq" id="WP_009871373.1">
    <property type="nucleotide sequence ID" value="NC_010287.1"/>
</dbReference>
<dbReference type="RefSeq" id="YP_001654365.1">
    <property type="nucleotide sequence ID" value="NC_010287.1"/>
</dbReference>
<dbReference type="SMR" id="B0B9D3"/>
<dbReference type="KEGG" id="ctb:CTL0281"/>
<dbReference type="PATRIC" id="fig|471472.4.peg.305"/>
<dbReference type="HOGENOM" id="CLU_100590_3_1_0"/>
<dbReference type="Proteomes" id="UP001154402">
    <property type="component" value="Chromosome"/>
</dbReference>
<dbReference type="GO" id="GO:0005737">
    <property type="term" value="C:cytoplasm"/>
    <property type="evidence" value="ECO:0007669"/>
    <property type="project" value="UniProtKB-ARBA"/>
</dbReference>
<dbReference type="GO" id="GO:0015935">
    <property type="term" value="C:small ribosomal subunit"/>
    <property type="evidence" value="ECO:0007669"/>
    <property type="project" value="TreeGrafter"/>
</dbReference>
<dbReference type="GO" id="GO:0003735">
    <property type="term" value="F:structural constituent of ribosome"/>
    <property type="evidence" value="ECO:0007669"/>
    <property type="project" value="InterPro"/>
</dbReference>
<dbReference type="GO" id="GO:0006412">
    <property type="term" value="P:translation"/>
    <property type="evidence" value="ECO:0007669"/>
    <property type="project" value="UniProtKB-UniRule"/>
</dbReference>
<dbReference type="FunFam" id="3.30.1320.10:FF:000015">
    <property type="entry name" value="30S ribosomal protein S16"/>
    <property type="match status" value="1"/>
</dbReference>
<dbReference type="Gene3D" id="3.30.1320.10">
    <property type="match status" value="1"/>
</dbReference>
<dbReference type="HAMAP" id="MF_00385">
    <property type="entry name" value="Ribosomal_bS16"/>
    <property type="match status" value="1"/>
</dbReference>
<dbReference type="InterPro" id="IPR000307">
    <property type="entry name" value="Ribosomal_bS16"/>
</dbReference>
<dbReference type="InterPro" id="IPR023803">
    <property type="entry name" value="Ribosomal_bS16_dom_sf"/>
</dbReference>
<dbReference type="NCBIfam" id="NF011095">
    <property type="entry name" value="PRK14522.1"/>
    <property type="match status" value="1"/>
</dbReference>
<dbReference type="NCBIfam" id="TIGR00002">
    <property type="entry name" value="S16"/>
    <property type="match status" value="1"/>
</dbReference>
<dbReference type="PANTHER" id="PTHR12919">
    <property type="entry name" value="30S RIBOSOMAL PROTEIN S16"/>
    <property type="match status" value="1"/>
</dbReference>
<dbReference type="PANTHER" id="PTHR12919:SF20">
    <property type="entry name" value="SMALL RIBOSOMAL SUBUNIT PROTEIN BS16M"/>
    <property type="match status" value="1"/>
</dbReference>
<dbReference type="Pfam" id="PF00886">
    <property type="entry name" value="Ribosomal_S16"/>
    <property type="match status" value="1"/>
</dbReference>
<dbReference type="SUPFAM" id="SSF54565">
    <property type="entry name" value="Ribosomal protein S16"/>
    <property type="match status" value="1"/>
</dbReference>
<name>RS16_CHLT2</name>
<protein>
    <recommendedName>
        <fullName evidence="1">Small ribosomal subunit protein bS16</fullName>
    </recommendedName>
    <alternativeName>
        <fullName evidence="2">30S ribosomal protein S16</fullName>
    </alternativeName>
</protein>
<comment type="similarity">
    <text evidence="1">Belongs to the bacterial ribosomal protein bS16 family.</text>
</comment>
<sequence>MALKIRLRQQGRKNHVVYRLVLADVESPRDGKYIELLGWYDPHSEQNYQLKSERIFYWLNQGAELTEKAGALVKQGAPGVYAELMAKKVARRAVVRQKRRAYRQRLAARKAEAAAK</sequence>
<evidence type="ECO:0000255" key="1">
    <source>
        <dbReference type="HAMAP-Rule" id="MF_00385"/>
    </source>
</evidence>
<evidence type="ECO:0000305" key="2"/>
<reference key="1">
    <citation type="journal article" date="2008" name="Genome Res.">
        <title>Chlamydia trachomatis: genome sequence analysis of lymphogranuloma venereum isolates.</title>
        <authorList>
            <person name="Thomson N.R."/>
            <person name="Holden M.T.G."/>
            <person name="Carder C."/>
            <person name="Lennard N."/>
            <person name="Lockey S.J."/>
            <person name="Marsh P."/>
            <person name="Skipp P."/>
            <person name="O'Connor C.D."/>
            <person name="Goodhead I."/>
            <person name="Norbertzcak H."/>
            <person name="Harris B."/>
            <person name="Ormond D."/>
            <person name="Rance R."/>
            <person name="Quail M.A."/>
            <person name="Parkhill J."/>
            <person name="Stephens R.S."/>
            <person name="Clarke I.N."/>
        </authorList>
    </citation>
    <scope>NUCLEOTIDE SEQUENCE [LARGE SCALE GENOMIC DNA]</scope>
    <source>
        <strain>ATCC VR-902B / DSM 19102 / 434/Bu</strain>
    </source>
</reference>
<keyword id="KW-0687">Ribonucleoprotein</keyword>
<keyword id="KW-0689">Ribosomal protein</keyword>